<organism>
    <name type="scientific">Bos taurus</name>
    <name type="common">Bovine</name>
    <dbReference type="NCBI Taxonomy" id="9913"/>
    <lineage>
        <taxon>Eukaryota</taxon>
        <taxon>Metazoa</taxon>
        <taxon>Chordata</taxon>
        <taxon>Craniata</taxon>
        <taxon>Vertebrata</taxon>
        <taxon>Euteleostomi</taxon>
        <taxon>Mammalia</taxon>
        <taxon>Eutheria</taxon>
        <taxon>Laurasiatheria</taxon>
        <taxon>Artiodactyla</taxon>
        <taxon>Ruminantia</taxon>
        <taxon>Pecora</taxon>
        <taxon>Bovidae</taxon>
        <taxon>Bovinae</taxon>
        <taxon>Bos</taxon>
    </lineage>
</organism>
<reference key="1">
    <citation type="submission" date="2005-09" db="EMBL/GenBank/DDBJ databases">
        <authorList>
            <consortium name="NIH - Mammalian Gene Collection (MGC) project"/>
        </authorList>
    </citation>
    <scope>NUCLEOTIDE SEQUENCE [LARGE SCALE MRNA]</scope>
    <source>
        <strain>Hereford</strain>
        <tissue>Ascending colon</tissue>
    </source>
</reference>
<sequence length="521" mass="58399">MASTRPSSTATKTKAPDDLVAPVVKKPHIYYGSLEEKERERLAKGESGLLGKEGLKAGIEAGNINITSGEVFEIEEHISERQAEVLAEFERRKRARQINVSTDDSEVKACLRALGEPITLFGEGPAERRERLRNILSVVGTDALKKTKKDDEKSKKSKEEYQQTWYHEGPHSLKVARLWIANYSLPRAMKRLEEARLHKEIPETTRTSQMQELHKSLRSLNNFCSQIGDDRPISYCHFSPNSKMLATACWSGLCKLWSVPDCNLLHTLRGHNTNVGAIVFHPKSTVSLDQKDVNLASCAADGSVKLWSLDSDEPVADIEGHTVRVARVTWHPSGRFLGTTCYDRSWRLWDLEAQEEILHQEGHSMGVYDIAFHQDGSLAGTGGLDAFGRVWDLRTGRCIMFLEGHLKEIYGINFSPNGYHIATGSGDNTCKVWDLRQRRCVYTIPAHQNLVTGVKFEPIHGNFLLTGAYDNTAKIWTHPGWSPLKTLAGHEGKVMGLDISSDGQLIATCSYDRTFKLWMAE</sequence>
<dbReference type="EMBL" id="BC105270">
    <property type="protein sequence ID" value="AAI05271.1"/>
    <property type="molecule type" value="mRNA"/>
</dbReference>
<dbReference type="RefSeq" id="NP_001029502.1">
    <property type="nucleotide sequence ID" value="NM_001034330.1"/>
</dbReference>
<dbReference type="SMR" id="Q3MHE2"/>
<dbReference type="FunCoup" id="Q3MHE2">
    <property type="interactions" value="4787"/>
</dbReference>
<dbReference type="STRING" id="9913.ENSBTAP00000006004"/>
<dbReference type="PaxDb" id="9913-ENSBTAP00000006004"/>
<dbReference type="GeneID" id="508735"/>
<dbReference type="KEGG" id="bta:508735"/>
<dbReference type="CTD" id="9128"/>
<dbReference type="VEuPathDB" id="HostDB:ENSBTAG00000004571"/>
<dbReference type="eggNOG" id="KOG0272">
    <property type="taxonomic scope" value="Eukaryota"/>
</dbReference>
<dbReference type="HOGENOM" id="CLU_000288_57_20_1"/>
<dbReference type="InParanoid" id="Q3MHE2"/>
<dbReference type="OMA" id="LNEPICY"/>
<dbReference type="OrthoDB" id="540662at2759"/>
<dbReference type="TreeFam" id="TF314922"/>
<dbReference type="Reactome" id="R-BTA-72163">
    <property type="pathway name" value="mRNA Splicing - Major Pathway"/>
</dbReference>
<dbReference type="Proteomes" id="UP000009136">
    <property type="component" value="Chromosome 8"/>
</dbReference>
<dbReference type="Bgee" id="ENSBTAG00000004571">
    <property type="expression patterns" value="Expressed in oviduct epithelium and 108 other cell types or tissues"/>
</dbReference>
<dbReference type="GO" id="GO:0016607">
    <property type="term" value="C:nuclear speck"/>
    <property type="evidence" value="ECO:0000250"/>
    <property type="project" value="UniProtKB"/>
</dbReference>
<dbReference type="GO" id="GO:0005681">
    <property type="term" value="C:spliceosomal complex"/>
    <property type="evidence" value="ECO:0007669"/>
    <property type="project" value="UniProtKB-KW"/>
</dbReference>
<dbReference type="GO" id="GO:0097525">
    <property type="term" value="C:spliceosomal snRNP complex"/>
    <property type="evidence" value="ECO:0000250"/>
    <property type="project" value="UniProtKB"/>
</dbReference>
<dbReference type="GO" id="GO:0071001">
    <property type="term" value="C:U4/U6 snRNP"/>
    <property type="evidence" value="ECO:0000250"/>
    <property type="project" value="UniProtKB"/>
</dbReference>
<dbReference type="GO" id="GO:0046540">
    <property type="term" value="C:U4/U6 x U5 tri-snRNP complex"/>
    <property type="evidence" value="ECO:0000318"/>
    <property type="project" value="GO_Central"/>
</dbReference>
<dbReference type="GO" id="GO:0030621">
    <property type="term" value="F:U4 snRNA binding"/>
    <property type="evidence" value="ECO:0000318"/>
    <property type="project" value="GO_Central"/>
</dbReference>
<dbReference type="GO" id="GO:0017070">
    <property type="term" value="F:U6 snRNA binding"/>
    <property type="evidence" value="ECO:0000318"/>
    <property type="project" value="GO_Central"/>
</dbReference>
<dbReference type="GO" id="GO:0000398">
    <property type="term" value="P:mRNA splicing, via spliceosome"/>
    <property type="evidence" value="ECO:0000318"/>
    <property type="project" value="GO_Central"/>
</dbReference>
<dbReference type="CDD" id="cd00200">
    <property type="entry name" value="WD40"/>
    <property type="match status" value="1"/>
</dbReference>
<dbReference type="FunFam" id="2.130.10.10:FF:000147">
    <property type="entry name" value="U4/U6 small nuclear ribonucleoprotein Prp4"/>
    <property type="match status" value="1"/>
</dbReference>
<dbReference type="FunFam" id="2.130.10.10:FF:000356">
    <property type="entry name" value="U4/U6 small nuclear ribonucleoprotein Prp4"/>
    <property type="match status" value="1"/>
</dbReference>
<dbReference type="FunFam" id="4.10.280.110:FF:000002">
    <property type="entry name" value="U4/U6 small nuclear ribonucleoprotein Prp4"/>
    <property type="match status" value="1"/>
</dbReference>
<dbReference type="FunFam" id="2.130.10.10:FF:000113">
    <property type="entry name" value="U4/U6 small nuclear ribonucleoprotein Prp4 isoform X1"/>
    <property type="match status" value="1"/>
</dbReference>
<dbReference type="Gene3D" id="4.10.280.110">
    <property type="entry name" value="Pre-mRNA processing factor 4 domain"/>
    <property type="match status" value="1"/>
</dbReference>
<dbReference type="Gene3D" id="2.130.10.10">
    <property type="entry name" value="YVTN repeat-like/Quinoprotein amine dehydrogenase"/>
    <property type="match status" value="3"/>
</dbReference>
<dbReference type="InterPro" id="IPR020472">
    <property type="entry name" value="G-protein_beta_WD-40_rep"/>
</dbReference>
<dbReference type="InterPro" id="IPR014906">
    <property type="entry name" value="PRP4-like"/>
</dbReference>
<dbReference type="InterPro" id="IPR036285">
    <property type="entry name" value="PRP4-like_sf"/>
</dbReference>
<dbReference type="InterPro" id="IPR015943">
    <property type="entry name" value="WD40/YVTN_repeat-like_dom_sf"/>
</dbReference>
<dbReference type="InterPro" id="IPR019775">
    <property type="entry name" value="WD40_repeat_CS"/>
</dbReference>
<dbReference type="InterPro" id="IPR036322">
    <property type="entry name" value="WD40_repeat_dom_sf"/>
</dbReference>
<dbReference type="InterPro" id="IPR001680">
    <property type="entry name" value="WD40_rpt"/>
</dbReference>
<dbReference type="PANTHER" id="PTHR19846:SF5">
    <property type="entry name" value="U4_U6 SMALL NUCLEAR RIBONUCLEOPROTEIN PRP4"/>
    <property type="match status" value="1"/>
</dbReference>
<dbReference type="PANTHER" id="PTHR19846">
    <property type="entry name" value="WD40 REPEAT PROTEIN"/>
    <property type="match status" value="1"/>
</dbReference>
<dbReference type="Pfam" id="PF08799">
    <property type="entry name" value="PRP4"/>
    <property type="match status" value="1"/>
</dbReference>
<dbReference type="Pfam" id="PF00400">
    <property type="entry name" value="WD40"/>
    <property type="match status" value="7"/>
</dbReference>
<dbReference type="PRINTS" id="PR00320">
    <property type="entry name" value="GPROTEINBRPT"/>
</dbReference>
<dbReference type="SMART" id="SM00500">
    <property type="entry name" value="SFM"/>
    <property type="match status" value="1"/>
</dbReference>
<dbReference type="SMART" id="SM00320">
    <property type="entry name" value="WD40"/>
    <property type="match status" value="7"/>
</dbReference>
<dbReference type="SUPFAM" id="SSF158230">
    <property type="entry name" value="PRP4-like"/>
    <property type="match status" value="1"/>
</dbReference>
<dbReference type="SUPFAM" id="SSF50978">
    <property type="entry name" value="WD40 repeat-like"/>
    <property type="match status" value="1"/>
</dbReference>
<dbReference type="PROSITE" id="PS00678">
    <property type="entry name" value="WD_REPEATS_1"/>
    <property type="match status" value="2"/>
</dbReference>
<dbReference type="PROSITE" id="PS50082">
    <property type="entry name" value="WD_REPEATS_2"/>
    <property type="match status" value="6"/>
</dbReference>
<dbReference type="PROSITE" id="PS50294">
    <property type="entry name" value="WD_REPEATS_REGION"/>
    <property type="match status" value="1"/>
</dbReference>
<accession>Q3MHE2</accession>
<name>PRP4_BOVIN</name>
<evidence type="ECO:0000250" key="1">
    <source>
        <dbReference type="UniProtKB" id="O43172"/>
    </source>
</evidence>
<proteinExistence type="evidence at transcript level"/>
<keyword id="KW-0007">Acetylation</keyword>
<keyword id="KW-0507">mRNA processing</keyword>
<keyword id="KW-0508">mRNA splicing</keyword>
<keyword id="KW-0539">Nucleus</keyword>
<keyword id="KW-1185">Reference proteome</keyword>
<keyword id="KW-0677">Repeat</keyword>
<keyword id="KW-0747">Spliceosome</keyword>
<keyword id="KW-0853">WD repeat</keyword>
<protein>
    <recommendedName>
        <fullName>U4/U6 small nuclear ribonucleoprotein Prp4</fullName>
    </recommendedName>
    <alternativeName>
        <fullName>U4/U6 snRNP 60 kDa protein</fullName>
    </alternativeName>
    <alternativeName>
        <fullName>WD splicing factor Prp4</fullName>
    </alternativeName>
</protein>
<comment type="function">
    <text evidence="1">Plays a role in pre-mRNA splicing as component of the U4/U6-U5 tri-snRNP complex that is involved in spliceosome assembly, and as component of the precatalytic spliceosome (spliceosome B complex).</text>
</comment>
<comment type="subunit">
    <text evidence="1">Component of the precatalytic spliceosome (spliceosome B complex) (By similarity). Component of the U4/U6-U5 tri-snRNP complex, a building block of the precatalytic spliceosome (spliceosome B complex) (By similarity). The U4/U6-U5 tri-snRNP complex is composed of the U4, U6 and U5 snRNAs and at least PRPF3, PRPF4, PRPF6, PRPF8, PRPF31, SNRNP200, TXNL4A, SNRNP40, SNRPB, SNRPD1, SNRPD2, SNRPD3, SNRPE, SNRPF, SNRPG, DDX23, CD2BP2, PPIH, SNU13, EFTUD2, SART1 and USP39, plus LSM2, LSM3, LSM4, LSM5, LSM6, LSM7 and LSM8 (By similarity). Interacts directly with PRPF18, PPIH and PRPF3 (By similarity). Part of a heteromeric complex containing PPIH, PRPF3 and PRPF4 that is stable in the absence of RNA (By similarity). Interacts with ERCC6 (By similarity).</text>
</comment>
<comment type="subcellular location">
    <subcellularLocation>
        <location evidence="1">Nucleus</location>
    </subcellularLocation>
    <subcellularLocation>
        <location evidence="1">Nucleus speckle</location>
    </subcellularLocation>
</comment>
<gene>
    <name type="primary">PRPF4</name>
</gene>
<feature type="chain" id="PRO_0000273725" description="U4/U6 small nuclear ribonucleoprotein Prp4">
    <location>
        <begin position="1"/>
        <end position="521"/>
    </location>
</feature>
<feature type="repeat" description="WD 1">
    <location>
        <begin position="229"/>
        <end position="268"/>
    </location>
</feature>
<feature type="repeat" description="WD 2">
    <location>
        <begin position="271"/>
        <end position="318"/>
    </location>
</feature>
<feature type="repeat" description="WD 3">
    <location>
        <begin position="321"/>
        <end position="360"/>
    </location>
</feature>
<feature type="repeat" description="WD 4">
    <location>
        <begin position="363"/>
        <end position="402"/>
    </location>
</feature>
<feature type="repeat" description="WD 5">
    <location>
        <begin position="405"/>
        <end position="444"/>
    </location>
</feature>
<feature type="repeat" description="WD 6">
    <location>
        <begin position="447"/>
        <end position="487"/>
    </location>
</feature>
<feature type="repeat" description="WD 7">
    <location>
        <begin position="490"/>
        <end position="521"/>
    </location>
</feature>
<feature type="modified residue" description="N6-acetyllysine" evidence="1">
    <location>
        <position position="26"/>
    </location>
</feature>